<evidence type="ECO:0000250" key="1">
    <source>
        <dbReference type="UniProtKB" id="P39515"/>
    </source>
</evidence>
<evidence type="ECO:0000255" key="2"/>
<evidence type="ECO:0000256" key="3">
    <source>
        <dbReference type="SAM" id="MobiDB-lite"/>
    </source>
</evidence>
<evidence type="ECO:0000269" key="4">
    <source>
    </source>
</evidence>
<evidence type="ECO:0000269" key="5">
    <source>
    </source>
</evidence>
<evidence type="ECO:0000303" key="6">
    <source>
    </source>
</evidence>
<evidence type="ECO:0000305" key="7"/>
<sequence length="172" mass="18273">MEEYAREPCPWRIVDDCGGAFTMGVIGGGVFQAIKGFRNAPVGIRHRLRGSANAVRIRAPQIGGSFAVWGGLFSTIDCGLVRLRGKEDPWNSITSGALTGAVLAARSGPLAMVGSAMMGGILLALIEGVGILLTRYTAQQFRNAPPFLEDPSQLPPKDGTPAPGYPSYQQYH</sequence>
<dbReference type="EMBL" id="AF034790">
    <property type="protein sequence ID" value="AAC24694.1"/>
    <property type="molecule type" value="mRNA"/>
</dbReference>
<dbReference type="EMBL" id="AJ005895">
    <property type="protein sequence ID" value="CAA06752.1"/>
    <property type="molecule type" value="mRNA"/>
</dbReference>
<dbReference type="EMBL" id="AF077039">
    <property type="protein sequence ID" value="AAD27772.1"/>
    <property type="molecule type" value="mRNA"/>
</dbReference>
<dbReference type="EMBL" id="AK290207">
    <property type="protein sequence ID" value="BAF82896.1"/>
    <property type="molecule type" value="mRNA"/>
</dbReference>
<dbReference type="EMBL" id="AF196971">
    <property type="status" value="NOT_ANNOTATED_CDS"/>
    <property type="molecule type" value="Genomic_DNA"/>
</dbReference>
<dbReference type="EMBL" id="AF207550">
    <property type="status" value="NOT_ANNOTATED_CDS"/>
    <property type="molecule type" value="Genomic_DNA"/>
</dbReference>
<dbReference type="EMBL" id="CH471224">
    <property type="protein sequence ID" value="EAW50741.1"/>
    <property type="molecule type" value="Genomic_DNA"/>
</dbReference>
<dbReference type="EMBL" id="BC010142">
    <property type="protein sequence ID" value="AAH10142.1"/>
    <property type="molecule type" value="mRNA"/>
</dbReference>
<dbReference type="EMBL" id="BC091473">
    <property type="status" value="NOT_ANNOTATED_CDS"/>
    <property type="molecule type" value="mRNA"/>
</dbReference>
<dbReference type="CCDS" id="CCDS14308.1">
    <molecule id="O60830-1"/>
</dbReference>
<dbReference type="CCDS" id="CCDS55411.1">
    <molecule id="O60830-2"/>
</dbReference>
<dbReference type="RefSeq" id="NP_001161419.1">
    <molecule id="O60830-2"/>
    <property type="nucleotide sequence ID" value="NM_001167947.2"/>
</dbReference>
<dbReference type="RefSeq" id="NP_001382426.1">
    <molecule id="O60830-2"/>
    <property type="nucleotide sequence ID" value="NM_001395497.1"/>
</dbReference>
<dbReference type="RefSeq" id="NP_001382427.1">
    <molecule id="O60830-1"/>
    <property type="nucleotide sequence ID" value="NM_001395498.1"/>
</dbReference>
<dbReference type="RefSeq" id="NP_005825.1">
    <molecule id="O60830-1"/>
    <property type="nucleotide sequence ID" value="NM_005834.5"/>
</dbReference>
<dbReference type="SMR" id="O60830"/>
<dbReference type="BioGRID" id="115539">
    <property type="interactions" value="45"/>
</dbReference>
<dbReference type="ComplexPortal" id="CPX-6130">
    <property type="entry name" value="TIM23 mitochondrial inner membrane pre-sequence translocase complex, TIM17B variant"/>
</dbReference>
<dbReference type="CORUM" id="O60830"/>
<dbReference type="FunCoup" id="O60830">
    <property type="interactions" value="1110"/>
</dbReference>
<dbReference type="IntAct" id="O60830">
    <property type="interactions" value="43"/>
</dbReference>
<dbReference type="MINT" id="O60830"/>
<dbReference type="STRING" id="9606.ENSP00000379999"/>
<dbReference type="GlyGen" id="O60830">
    <property type="glycosylation" value="1 site, 1 O-linked glycan (1 site)"/>
</dbReference>
<dbReference type="iPTMnet" id="O60830"/>
<dbReference type="PhosphoSitePlus" id="O60830"/>
<dbReference type="SwissPalm" id="O60830"/>
<dbReference type="BioMuta" id="TIMM17B"/>
<dbReference type="jPOST" id="O60830"/>
<dbReference type="MassIVE" id="O60830"/>
<dbReference type="PeptideAtlas" id="O60830"/>
<dbReference type="ProteomicsDB" id="49622">
    <molecule id="O60830-1"/>
</dbReference>
<dbReference type="Pumba" id="O60830"/>
<dbReference type="TopDownProteomics" id="O60830-1">
    <molecule id="O60830-1"/>
</dbReference>
<dbReference type="Antibodypedia" id="25886">
    <property type="antibodies" value="77 antibodies from 19 providers"/>
</dbReference>
<dbReference type="DNASU" id="10245"/>
<dbReference type="Ensembl" id="ENST00000376582.7">
    <molecule id="O60830-1"/>
    <property type="protein sequence ID" value="ENSP00000365766.3"/>
    <property type="gene ID" value="ENSG00000126768.13"/>
</dbReference>
<dbReference type="Ensembl" id="ENST00000396779.7">
    <molecule id="O60830-2"/>
    <property type="protein sequence ID" value="ENSP00000379999.3"/>
    <property type="gene ID" value="ENSG00000126768.13"/>
</dbReference>
<dbReference type="Ensembl" id="ENST00000465150.6">
    <molecule id="O60830-2"/>
    <property type="protein sequence ID" value="ENSP00000477073.1"/>
    <property type="gene ID" value="ENSG00000126768.13"/>
</dbReference>
<dbReference type="Ensembl" id="ENST00000696123.1">
    <molecule id="O60830-1"/>
    <property type="protein sequence ID" value="ENSP00000512416.1"/>
    <property type="gene ID" value="ENSG00000126768.13"/>
</dbReference>
<dbReference type="Ensembl" id="ENST00000710084.1">
    <molecule id="O60830-2"/>
    <property type="protein sequence ID" value="ENSP00000518046.1"/>
    <property type="gene ID" value="ENSG00000292215.1"/>
</dbReference>
<dbReference type="Ensembl" id="ENST00000710085.1">
    <molecule id="O60830-1"/>
    <property type="protein sequence ID" value="ENSP00000518047.1"/>
    <property type="gene ID" value="ENSG00000292215.1"/>
</dbReference>
<dbReference type="Ensembl" id="ENST00000710086.1">
    <molecule id="O60830-2"/>
    <property type="protein sequence ID" value="ENSP00000518048.1"/>
    <property type="gene ID" value="ENSG00000292215.1"/>
</dbReference>
<dbReference type="Ensembl" id="ENST00000710087.1">
    <molecule id="O60830-1"/>
    <property type="protein sequence ID" value="ENSP00000518049.1"/>
    <property type="gene ID" value="ENSG00000292215.1"/>
</dbReference>
<dbReference type="GeneID" id="10245"/>
<dbReference type="KEGG" id="hsa:10245"/>
<dbReference type="MANE-Select" id="ENST00000696123.1">
    <property type="protein sequence ID" value="ENSP00000512416.1"/>
    <property type="RefSeq nucleotide sequence ID" value="NM_001395498.1"/>
    <property type="RefSeq protein sequence ID" value="NP_001382427.1"/>
</dbReference>
<dbReference type="UCSC" id="uc004dla.3">
    <molecule id="O60830-1"/>
    <property type="organism name" value="human"/>
</dbReference>
<dbReference type="AGR" id="HGNC:17310"/>
<dbReference type="CTD" id="10245"/>
<dbReference type="GeneCards" id="TIMM17B"/>
<dbReference type="HGNC" id="HGNC:17310">
    <property type="gene designation" value="TIMM17B"/>
</dbReference>
<dbReference type="HPA" id="ENSG00000126768">
    <property type="expression patterns" value="Low tissue specificity"/>
</dbReference>
<dbReference type="MIM" id="300249">
    <property type="type" value="gene"/>
</dbReference>
<dbReference type="neXtProt" id="NX_O60830"/>
<dbReference type="OpenTargets" id="ENSG00000126768"/>
<dbReference type="PharmGKB" id="PA38226"/>
<dbReference type="VEuPathDB" id="HostDB:ENSG00000126768"/>
<dbReference type="GeneTree" id="ENSGT00390000017780"/>
<dbReference type="HOGENOM" id="CLU_087811_1_1_1"/>
<dbReference type="InParanoid" id="O60830"/>
<dbReference type="OMA" id="FDCTFQY"/>
<dbReference type="OrthoDB" id="2261329at2759"/>
<dbReference type="PAN-GO" id="O60830">
    <property type="GO annotations" value="4 GO annotations based on evolutionary models"/>
</dbReference>
<dbReference type="PhylomeDB" id="O60830"/>
<dbReference type="TreeFam" id="TF106195"/>
<dbReference type="PathwayCommons" id="O60830"/>
<dbReference type="Reactome" id="R-HSA-1268020">
    <property type="pathway name" value="Mitochondrial protein import"/>
</dbReference>
<dbReference type="SignaLink" id="O60830"/>
<dbReference type="BioGRID-ORCS" id="10245">
    <property type="hits" value="7 hits in 769 CRISPR screens"/>
</dbReference>
<dbReference type="ChiTaRS" id="TIMM17B">
    <property type="organism name" value="human"/>
</dbReference>
<dbReference type="GenomeRNAi" id="10245"/>
<dbReference type="Pharos" id="O60830">
    <property type="development level" value="Tdark"/>
</dbReference>
<dbReference type="PRO" id="PR:O60830"/>
<dbReference type="Proteomes" id="UP000005640">
    <property type="component" value="Chromosome X"/>
</dbReference>
<dbReference type="RNAct" id="O60830">
    <property type="molecule type" value="protein"/>
</dbReference>
<dbReference type="Bgee" id="ENSG00000126768">
    <property type="expression patterns" value="Expressed in apex of heart and 176 other cell types or tissues"/>
</dbReference>
<dbReference type="ExpressionAtlas" id="O60830">
    <property type="expression patterns" value="baseline and differential"/>
</dbReference>
<dbReference type="GO" id="GO:0005743">
    <property type="term" value="C:mitochondrial inner membrane"/>
    <property type="evidence" value="ECO:0000314"/>
    <property type="project" value="BHF-UCL"/>
</dbReference>
<dbReference type="GO" id="GO:0005739">
    <property type="term" value="C:mitochondrion"/>
    <property type="evidence" value="ECO:0006056"/>
    <property type="project" value="FlyBase"/>
</dbReference>
<dbReference type="GO" id="GO:0005744">
    <property type="term" value="C:TIM23 mitochondrial import inner membrane translocase complex"/>
    <property type="evidence" value="ECO:0000314"/>
    <property type="project" value="BHF-UCL"/>
</dbReference>
<dbReference type="GO" id="GO:0008320">
    <property type="term" value="F:protein transmembrane transporter activity"/>
    <property type="evidence" value="ECO:0007669"/>
    <property type="project" value="InterPro"/>
</dbReference>
<dbReference type="GO" id="GO:0006886">
    <property type="term" value="P:intracellular protein transport"/>
    <property type="evidence" value="ECO:0000303"/>
    <property type="project" value="ComplexPortal"/>
</dbReference>
<dbReference type="GO" id="GO:0030150">
    <property type="term" value="P:protein import into mitochondrial matrix"/>
    <property type="evidence" value="ECO:0000318"/>
    <property type="project" value="GO_Central"/>
</dbReference>
<dbReference type="GO" id="GO:0006626">
    <property type="term" value="P:protein targeting to mitochondrion"/>
    <property type="evidence" value="ECO:0000304"/>
    <property type="project" value="ProtInc"/>
</dbReference>
<dbReference type="InterPro" id="IPR005678">
    <property type="entry name" value="Tim17"/>
</dbReference>
<dbReference type="NCBIfam" id="TIGR00980">
    <property type="entry name" value="3a0801so1tim17"/>
    <property type="match status" value="1"/>
</dbReference>
<dbReference type="PANTHER" id="PTHR10485">
    <property type="entry name" value="MITOCHONDRIAL IMPORT INNER MEMBRANE TRANSLOCASE SUBUNIT TIM-17"/>
    <property type="match status" value="1"/>
</dbReference>
<dbReference type="PANTHER" id="PTHR10485:SF2">
    <property type="entry name" value="MITOCHONDRIAL IMPORT INNER MEMBRANE TRANSLOCASE SUBUNIT TIM17-B"/>
    <property type="match status" value="1"/>
</dbReference>
<dbReference type="Pfam" id="PF02466">
    <property type="entry name" value="Tim17"/>
    <property type="match status" value="1"/>
</dbReference>
<comment type="function">
    <text>Essential component of the TIM23 complex, a complex that mediates the translocation of transit peptide-containing proteins across the mitochondrial inner membrane.</text>
</comment>
<comment type="subunit">
    <text evidence="4">Component of the TIM23 complex at least composed of TIMM23, TIMM17 (TIMM17A or TIMM17B) and TIMM50. The complex interacts with the TIMM44 component of the PAM complex and with DNAJC15.</text>
</comment>
<comment type="interaction">
    <interactant intactId="EBI-2372529">
        <id>O60830</id>
    </interactant>
    <interactant intactId="EBI-11954292">
        <id>Q86V38</id>
        <label>ATN1</label>
    </interactant>
    <organismsDiffer>false</organismsDiffer>
    <experiments>3</experiments>
</comment>
<comment type="interaction">
    <interactant intactId="EBI-2372529">
        <id>O60830</id>
    </interactant>
    <interactant intactId="EBI-7062247">
        <id>Q9UHD4</id>
        <label>CIDEB</label>
    </interactant>
    <organismsDiffer>false</organismsDiffer>
    <experiments>5</experiments>
</comment>
<comment type="interaction">
    <interactant intactId="EBI-2372529">
        <id>O60830</id>
    </interactant>
    <interactant intactId="EBI-6875961">
        <id>P02489</id>
        <label>CRYAA</label>
    </interactant>
    <organismsDiffer>false</organismsDiffer>
    <experiments>3</experiments>
</comment>
<comment type="interaction">
    <interactant intactId="EBI-2372529">
        <id>O60830</id>
    </interactant>
    <interactant intactId="EBI-356015">
        <id>Q14204</id>
        <label>DYNC1H1</label>
    </interactant>
    <organismsDiffer>false</organismsDiffer>
    <experiments>3</experiments>
</comment>
<comment type="interaction">
    <interactant intactId="EBI-2372529">
        <id>O60830</id>
    </interactant>
    <interactant intactId="EBI-2565863">
        <id>P00488</id>
        <label>F13A1</label>
    </interactant>
    <organismsDiffer>false</organismsDiffer>
    <experiments>3</experiments>
</comment>
<comment type="interaction">
    <interactant intactId="EBI-2372529">
        <id>O60830</id>
    </interactant>
    <interactant intactId="EBI-348399">
        <id>P22607</id>
        <label>FGFR3</label>
    </interactant>
    <organismsDiffer>false</organismsDiffer>
    <experiments>3</experiments>
</comment>
<comment type="interaction">
    <interactant intactId="EBI-2372529">
        <id>O60830</id>
    </interactant>
    <interactant intactId="EBI-25913156">
        <id>O14908-2</id>
        <label>GIPC1</label>
    </interactant>
    <organismsDiffer>false</organismsDiffer>
    <experiments>3</experiments>
</comment>
<comment type="interaction">
    <interactant intactId="EBI-2372529">
        <id>O60830</id>
    </interactant>
    <interactant intactId="EBI-8285963">
        <id>Q14957</id>
        <label>GRIN2C</label>
    </interactant>
    <organismsDiffer>false</organismsDiffer>
    <experiments>3</experiments>
</comment>
<comment type="interaction">
    <interactant intactId="EBI-2372529">
        <id>O60830</id>
    </interactant>
    <interactant intactId="EBI-747754">
        <id>P28799</id>
        <label>GRN</label>
    </interactant>
    <organismsDiffer>false</organismsDiffer>
    <experiments>3</experiments>
</comment>
<comment type="interaction">
    <interactant intactId="EBI-2372529">
        <id>O60830</id>
    </interactant>
    <interactant intactId="EBI-351506">
        <id>P06396</id>
        <label>GSN</label>
    </interactant>
    <organismsDiffer>false</organismsDiffer>
    <experiments>3</experiments>
</comment>
<comment type="interaction">
    <interactant intactId="EBI-2372529">
        <id>O60830</id>
    </interactant>
    <interactant intactId="EBI-352682">
        <id>P04792</id>
        <label>HSPB1</label>
    </interactant>
    <organismsDiffer>false</organismsDiffer>
    <experiments>3</experiments>
</comment>
<comment type="interaction">
    <interactant intactId="EBI-2372529">
        <id>O60830</id>
    </interactant>
    <interactant intactId="EBI-10975473">
        <id>O60333-2</id>
        <label>KIF1B</label>
    </interactant>
    <organismsDiffer>false</organismsDiffer>
    <experiments>3</experiments>
</comment>
<comment type="interaction">
    <interactant intactId="EBI-2372529">
        <id>O60830</id>
    </interactant>
    <interactant intactId="EBI-719403">
        <id>O95563</id>
        <label>MPC2</label>
    </interactant>
    <organismsDiffer>false</organismsDiffer>
    <experiments>3</experiments>
</comment>
<comment type="interaction">
    <interactant intactId="EBI-2372529">
        <id>O60830</id>
    </interactant>
    <interactant intactId="EBI-709754">
        <id>Q9HB07</id>
        <label>MYG1</label>
    </interactant>
    <organismsDiffer>false</organismsDiffer>
    <experiments>3</experiments>
</comment>
<comment type="interaction">
    <interactant intactId="EBI-2372529">
        <id>O60830</id>
    </interactant>
    <interactant intactId="EBI-1307">
        <id>Q13153</id>
        <label>PAK1</label>
    </interactant>
    <organismsDiffer>false</organismsDiffer>
    <experiments>3</experiments>
</comment>
<comment type="interaction">
    <interactant intactId="EBI-2372529">
        <id>O60830</id>
    </interactant>
    <interactant intactId="EBI-17589229">
        <id>Q6NTF9-3</id>
        <label>RHBDD2</label>
    </interactant>
    <organismsDiffer>false</organismsDiffer>
    <experiments>3</experiments>
</comment>
<comment type="interaction">
    <interactant intactId="EBI-2372529">
        <id>O60830</id>
    </interactant>
    <interactant intactId="EBI-396669">
        <id>Q9Y3C5</id>
        <label>RNF11</label>
    </interactant>
    <organismsDiffer>false</organismsDiffer>
    <experiments>3</experiments>
</comment>
<comment type="interaction">
    <interactant intactId="EBI-2372529">
        <id>O60830</id>
    </interactant>
    <interactant intactId="EBI-10278496">
        <id>Q53QW1</id>
        <label>TEX44</label>
    </interactant>
    <organismsDiffer>false</organismsDiffer>
    <experiments>3</experiments>
</comment>
<comment type="interaction">
    <interactant intactId="EBI-2372529">
        <id>O60830</id>
    </interactant>
    <interactant intactId="EBI-1047996">
        <id>O14925</id>
        <label>TIMM23</label>
    </interactant>
    <organismsDiffer>false</organismsDiffer>
    <experiments>4</experiments>
</comment>
<comment type="interaction">
    <interactant intactId="EBI-2372529">
        <id>O60830</id>
    </interactant>
    <interactant intactId="EBI-741480">
        <id>Q9UMX0</id>
        <label>UBQLN1</label>
    </interactant>
    <organismsDiffer>false</organismsDiffer>
    <experiments>3</experiments>
</comment>
<comment type="interaction">
    <interactant intactId="EBI-2372529">
        <id>O60830</id>
    </interactant>
    <interactant intactId="EBI-720609">
        <id>O76024</id>
        <label>WFS1</label>
    </interactant>
    <organismsDiffer>false</organismsDiffer>
    <experiments>3</experiments>
</comment>
<comment type="interaction">
    <interactant intactId="EBI-2372529">
        <id>O60830</id>
    </interactant>
    <interactant intactId="EBI-25900580">
        <id>Q9Y649</id>
    </interactant>
    <organismsDiffer>false</organismsDiffer>
    <experiments>3</experiments>
</comment>
<comment type="subcellular location">
    <subcellularLocation>
        <location>Mitochondrion inner membrane</location>
        <topology>Multi-pass membrane protein</topology>
    </subcellularLocation>
</comment>
<comment type="alternative products">
    <event type="alternative splicing"/>
    <isoform>
        <id>O60830-1</id>
        <name>1</name>
        <sequence type="displayed"/>
    </isoform>
    <isoform>
        <id>O60830-2</id>
        <name>2</name>
        <sequence type="described" ref="VSP_047215"/>
    </isoform>
</comment>
<comment type="tissue specificity">
    <text>Expression is abundant in heart and skeletal muscle, intermediate in brain, and weak in pancreas, placenta, kidney and liver.</text>
</comment>
<comment type="PTM">
    <text evidence="5">Forms one disulfide bond.</text>
</comment>
<comment type="similarity">
    <text evidence="7">Belongs to the Tim17/Tim22/Tim23 family.</text>
</comment>
<reference key="1">
    <citation type="journal article" date="1999" name="J. Mol. Biol.">
        <title>Genetic and structural characterization of the human mitochondrial inner membrane translocase.</title>
        <authorList>
            <person name="Bauer M.F."/>
            <person name="Gempel K."/>
            <person name="Reichert A.S."/>
            <person name="Rappold G.A."/>
            <person name="Lichtner P."/>
            <person name="Gerbitz K.-D."/>
            <person name="Neupert W."/>
            <person name="Brunner M."/>
            <person name="Hofmann S."/>
        </authorList>
    </citation>
    <scope>NUCLEOTIDE SEQUENCE [MRNA] (ISOFORM 1)</scope>
</reference>
<reference key="2">
    <citation type="submission" date="1998-04" db="EMBL/GenBank/DDBJ databases">
        <title>Transcription map in Xp11.23.</title>
        <authorList>
            <person name="Strom T.M."/>
            <person name="Nyakatura G."/>
            <person name="Hellebrand H."/>
            <person name="Drescher B."/>
            <person name="Rosenthal A."/>
            <person name="Meindl A."/>
        </authorList>
    </citation>
    <scope>NUCLEOTIDE SEQUENCE [LARGE SCALE MRNA] (ISOFORM 1)</scope>
    <source>
        <tissue>Peripheral blood leukocyte</tissue>
    </source>
</reference>
<reference key="3">
    <citation type="journal article" date="2000" name="Genome Res.">
        <title>Cloning and functional analysis of cDNAs with open reading frames for 300 previously undefined genes expressed in CD34+ hematopoietic stem/progenitor cells.</title>
        <authorList>
            <person name="Zhang Q.-H."/>
            <person name="Ye M."/>
            <person name="Wu X.-Y."/>
            <person name="Ren S.-X."/>
            <person name="Zhao M."/>
            <person name="Zhao C.-J."/>
            <person name="Fu G."/>
            <person name="Shen Y."/>
            <person name="Fan H.-Y."/>
            <person name="Lu G."/>
            <person name="Zhong M."/>
            <person name="Xu X.-R."/>
            <person name="Han Z.-G."/>
            <person name="Zhang J.-W."/>
            <person name="Tao J."/>
            <person name="Huang Q.-H."/>
            <person name="Zhou J."/>
            <person name="Hu G.-X."/>
            <person name="Gu J."/>
            <person name="Chen S.-J."/>
            <person name="Chen Z."/>
        </authorList>
    </citation>
    <scope>NUCLEOTIDE SEQUENCE [LARGE SCALE MRNA] (ISOFORM 1)</scope>
    <source>
        <tissue>Umbilical cord blood</tissue>
    </source>
</reference>
<reference key="4">
    <citation type="journal article" date="2004" name="Nat. Genet.">
        <title>Complete sequencing and characterization of 21,243 full-length human cDNAs.</title>
        <authorList>
            <person name="Ota T."/>
            <person name="Suzuki Y."/>
            <person name="Nishikawa T."/>
            <person name="Otsuki T."/>
            <person name="Sugiyama T."/>
            <person name="Irie R."/>
            <person name="Wakamatsu A."/>
            <person name="Hayashi K."/>
            <person name="Sato H."/>
            <person name="Nagai K."/>
            <person name="Kimura K."/>
            <person name="Makita H."/>
            <person name="Sekine M."/>
            <person name="Obayashi M."/>
            <person name="Nishi T."/>
            <person name="Shibahara T."/>
            <person name="Tanaka T."/>
            <person name="Ishii S."/>
            <person name="Yamamoto J."/>
            <person name="Saito K."/>
            <person name="Kawai Y."/>
            <person name="Isono Y."/>
            <person name="Nakamura Y."/>
            <person name="Nagahari K."/>
            <person name="Murakami K."/>
            <person name="Yasuda T."/>
            <person name="Iwayanagi T."/>
            <person name="Wagatsuma M."/>
            <person name="Shiratori A."/>
            <person name="Sudo H."/>
            <person name="Hosoiri T."/>
            <person name="Kaku Y."/>
            <person name="Kodaira H."/>
            <person name="Kondo H."/>
            <person name="Sugawara M."/>
            <person name="Takahashi M."/>
            <person name="Kanda K."/>
            <person name="Yokoi T."/>
            <person name="Furuya T."/>
            <person name="Kikkawa E."/>
            <person name="Omura Y."/>
            <person name="Abe K."/>
            <person name="Kamihara K."/>
            <person name="Katsuta N."/>
            <person name="Sato K."/>
            <person name="Tanikawa M."/>
            <person name="Yamazaki M."/>
            <person name="Ninomiya K."/>
            <person name="Ishibashi T."/>
            <person name="Yamashita H."/>
            <person name="Murakawa K."/>
            <person name="Fujimori K."/>
            <person name="Tanai H."/>
            <person name="Kimata M."/>
            <person name="Watanabe M."/>
            <person name="Hiraoka S."/>
            <person name="Chiba Y."/>
            <person name="Ishida S."/>
            <person name="Ono Y."/>
            <person name="Takiguchi S."/>
            <person name="Watanabe S."/>
            <person name="Yosida M."/>
            <person name="Hotuta T."/>
            <person name="Kusano J."/>
            <person name="Kanehori K."/>
            <person name="Takahashi-Fujii A."/>
            <person name="Hara H."/>
            <person name="Tanase T.-O."/>
            <person name="Nomura Y."/>
            <person name="Togiya S."/>
            <person name="Komai F."/>
            <person name="Hara R."/>
            <person name="Takeuchi K."/>
            <person name="Arita M."/>
            <person name="Imose N."/>
            <person name="Musashino K."/>
            <person name="Yuuki H."/>
            <person name="Oshima A."/>
            <person name="Sasaki N."/>
            <person name="Aotsuka S."/>
            <person name="Yoshikawa Y."/>
            <person name="Matsunawa H."/>
            <person name="Ichihara T."/>
            <person name="Shiohata N."/>
            <person name="Sano S."/>
            <person name="Moriya S."/>
            <person name="Momiyama H."/>
            <person name="Satoh N."/>
            <person name="Takami S."/>
            <person name="Terashima Y."/>
            <person name="Suzuki O."/>
            <person name="Nakagawa S."/>
            <person name="Senoh A."/>
            <person name="Mizoguchi H."/>
            <person name="Goto Y."/>
            <person name="Shimizu F."/>
            <person name="Wakebe H."/>
            <person name="Hishigaki H."/>
            <person name="Watanabe T."/>
            <person name="Sugiyama A."/>
            <person name="Takemoto M."/>
            <person name="Kawakami B."/>
            <person name="Yamazaki M."/>
            <person name="Watanabe K."/>
            <person name="Kumagai A."/>
            <person name="Itakura S."/>
            <person name="Fukuzumi Y."/>
            <person name="Fujimori Y."/>
            <person name="Komiyama M."/>
            <person name="Tashiro H."/>
            <person name="Tanigami A."/>
            <person name="Fujiwara T."/>
            <person name="Ono T."/>
            <person name="Yamada K."/>
            <person name="Fujii Y."/>
            <person name="Ozaki K."/>
            <person name="Hirao M."/>
            <person name="Ohmori Y."/>
            <person name="Kawabata A."/>
            <person name="Hikiji T."/>
            <person name="Kobatake N."/>
            <person name="Inagaki H."/>
            <person name="Ikema Y."/>
            <person name="Okamoto S."/>
            <person name="Okitani R."/>
            <person name="Kawakami T."/>
            <person name="Noguchi S."/>
            <person name="Itoh T."/>
            <person name="Shigeta K."/>
            <person name="Senba T."/>
            <person name="Matsumura K."/>
            <person name="Nakajima Y."/>
            <person name="Mizuno T."/>
            <person name="Morinaga M."/>
            <person name="Sasaki M."/>
            <person name="Togashi T."/>
            <person name="Oyama M."/>
            <person name="Hata H."/>
            <person name="Watanabe M."/>
            <person name="Komatsu T."/>
            <person name="Mizushima-Sugano J."/>
            <person name="Satoh T."/>
            <person name="Shirai Y."/>
            <person name="Takahashi Y."/>
            <person name="Nakagawa K."/>
            <person name="Okumura K."/>
            <person name="Nagase T."/>
            <person name="Nomura N."/>
            <person name="Kikuchi H."/>
            <person name="Masuho Y."/>
            <person name="Yamashita R."/>
            <person name="Nakai K."/>
            <person name="Yada T."/>
            <person name="Nakamura Y."/>
            <person name="Ohara O."/>
            <person name="Isogai T."/>
            <person name="Sugano S."/>
        </authorList>
    </citation>
    <scope>NUCLEOTIDE SEQUENCE [LARGE SCALE MRNA] (ISOFORM 1)</scope>
    <source>
        <tissue>Thalamus</tissue>
    </source>
</reference>
<reference key="5">
    <citation type="journal article" date="2005" name="Nature">
        <title>The DNA sequence of the human X chromosome.</title>
        <authorList>
            <person name="Ross M.T."/>
            <person name="Grafham D.V."/>
            <person name="Coffey A.J."/>
            <person name="Scherer S."/>
            <person name="McLay K."/>
            <person name="Muzny D."/>
            <person name="Platzer M."/>
            <person name="Howell G.R."/>
            <person name="Burrows C."/>
            <person name="Bird C.P."/>
            <person name="Frankish A."/>
            <person name="Lovell F.L."/>
            <person name="Howe K.L."/>
            <person name="Ashurst J.L."/>
            <person name="Fulton R.S."/>
            <person name="Sudbrak R."/>
            <person name="Wen G."/>
            <person name="Jones M.C."/>
            <person name="Hurles M.E."/>
            <person name="Andrews T.D."/>
            <person name="Scott C.E."/>
            <person name="Searle S."/>
            <person name="Ramser J."/>
            <person name="Whittaker A."/>
            <person name="Deadman R."/>
            <person name="Carter N.P."/>
            <person name="Hunt S.E."/>
            <person name="Chen R."/>
            <person name="Cree A."/>
            <person name="Gunaratne P."/>
            <person name="Havlak P."/>
            <person name="Hodgson A."/>
            <person name="Metzker M.L."/>
            <person name="Richards S."/>
            <person name="Scott G."/>
            <person name="Steffen D."/>
            <person name="Sodergren E."/>
            <person name="Wheeler D.A."/>
            <person name="Worley K.C."/>
            <person name="Ainscough R."/>
            <person name="Ambrose K.D."/>
            <person name="Ansari-Lari M.A."/>
            <person name="Aradhya S."/>
            <person name="Ashwell R.I."/>
            <person name="Babbage A.K."/>
            <person name="Bagguley C.L."/>
            <person name="Ballabio A."/>
            <person name="Banerjee R."/>
            <person name="Barker G.E."/>
            <person name="Barlow K.F."/>
            <person name="Barrett I.P."/>
            <person name="Bates K.N."/>
            <person name="Beare D.M."/>
            <person name="Beasley H."/>
            <person name="Beasley O."/>
            <person name="Beck A."/>
            <person name="Bethel G."/>
            <person name="Blechschmidt K."/>
            <person name="Brady N."/>
            <person name="Bray-Allen S."/>
            <person name="Bridgeman A.M."/>
            <person name="Brown A.J."/>
            <person name="Brown M.J."/>
            <person name="Bonnin D."/>
            <person name="Bruford E.A."/>
            <person name="Buhay C."/>
            <person name="Burch P."/>
            <person name="Burford D."/>
            <person name="Burgess J."/>
            <person name="Burrill W."/>
            <person name="Burton J."/>
            <person name="Bye J.M."/>
            <person name="Carder C."/>
            <person name="Carrel L."/>
            <person name="Chako J."/>
            <person name="Chapman J.C."/>
            <person name="Chavez D."/>
            <person name="Chen E."/>
            <person name="Chen G."/>
            <person name="Chen Y."/>
            <person name="Chen Z."/>
            <person name="Chinault C."/>
            <person name="Ciccodicola A."/>
            <person name="Clark S.Y."/>
            <person name="Clarke G."/>
            <person name="Clee C.M."/>
            <person name="Clegg S."/>
            <person name="Clerc-Blankenburg K."/>
            <person name="Clifford K."/>
            <person name="Cobley V."/>
            <person name="Cole C.G."/>
            <person name="Conquer J.S."/>
            <person name="Corby N."/>
            <person name="Connor R.E."/>
            <person name="David R."/>
            <person name="Davies J."/>
            <person name="Davis C."/>
            <person name="Davis J."/>
            <person name="Delgado O."/>
            <person name="Deshazo D."/>
            <person name="Dhami P."/>
            <person name="Ding Y."/>
            <person name="Dinh H."/>
            <person name="Dodsworth S."/>
            <person name="Draper H."/>
            <person name="Dugan-Rocha S."/>
            <person name="Dunham A."/>
            <person name="Dunn M."/>
            <person name="Durbin K.J."/>
            <person name="Dutta I."/>
            <person name="Eades T."/>
            <person name="Ellwood M."/>
            <person name="Emery-Cohen A."/>
            <person name="Errington H."/>
            <person name="Evans K.L."/>
            <person name="Faulkner L."/>
            <person name="Francis F."/>
            <person name="Frankland J."/>
            <person name="Fraser A.E."/>
            <person name="Galgoczy P."/>
            <person name="Gilbert J."/>
            <person name="Gill R."/>
            <person name="Gloeckner G."/>
            <person name="Gregory S.G."/>
            <person name="Gribble S."/>
            <person name="Griffiths C."/>
            <person name="Grocock R."/>
            <person name="Gu Y."/>
            <person name="Gwilliam R."/>
            <person name="Hamilton C."/>
            <person name="Hart E.A."/>
            <person name="Hawes A."/>
            <person name="Heath P.D."/>
            <person name="Heitmann K."/>
            <person name="Hennig S."/>
            <person name="Hernandez J."/>
            <person name="Hinzmann B."/>
            <person name="Ho S."/>
            <person name="Hoffs M."/>
            <person name="Howden P.J."/>
            <person name="Huckle E.J."/>
            <person name="Hume J."/>
            <person name="Hunt P.J."/>
            <person name="Hunt A.R."/>
            <person name="Isherwood J."/>
            <person name="Jacob L."/>
            <person name="Johnson D."/>
            <person name="Jones S."/>
            <person name="de Jong P.J."/>
            <person name="Joseph S.S."/>
            <person name="Keenan S."/>
            <person name="Kelly S."/>
            <person name="Kershaw J.K."/>
            <person name="Khan Z."/>
            <person name="Kioschis P."/>
            <person name="Klages S."/>
            <person name="Knights A.J."/>
            <person name="Kosiura A."/>
            <person name="Kovar-Smith C."/>
            <person name="Laird G.K."/>
            <person name="Langford C."/>
            <person name="Lawlor S."/>
            <person name="Leversha M."/>
            <person name="Lewis L."/>
            <person name="Liu W."/>
            <person name="Lloyd C."/>
            <person name="Lloyd D.M."/>
            <person name="Loulseged H."/>
            <person name="Loveland J.E."/>
            <person name="Lovell J.D."/>
            <person name="Lozado R."/>
            <person name="Lu J."/>
            <person name="Lyne R."/>
            <person name="Ma J."/>
            <person name="Maheshwari M."/>
            <person name="Matthews L.H."/>
            <person name="McDowall J."/>
            <person name="McLaren S."/>
            <person name="McMurray A."/>
            <person name="Meidl P."/>
            <person name="Meitinger T."/>
            <person name="Milne S."/>
            <person name="Miner G."/>
            <person name="Mistry S.L."/>
            <person name="Morgan M."/>
            <person name="Morris S."/>
            <person name="Mueller I."/>
            <person name="Mullikin J.C."/>
            <person name="Nguyen N."/>
            <person name="Nordsiek G."/>
            <person name="Nyakatura G."/>
            <person name="O'dell C.N."/>
            <person name="Okwuonu G."/>
            <person name="Palmer S."/>
            <person name="Pandian R."/>
            <person name="Parker D."/>
            <person name="Parrish J."/>
            <person name="Pasternak S."/>
            <person name="Patel D."/>
            <person name="Pearce A.V."/>
            <person name="Pearson D.M."/>
            <person name="Pelan S.E."/>
            <person name="Perez L."/>
            <person name="Porter K.M."/>
            <person name="Ramsey Y."/>
            <person name="Reichwald K."/>
            <person name="Rhodes S."/>
            <person name="Ridler K.A."/>
            <person name="Schlessinger D."/>
            <person name="Schueler M.G."/>
            <person name="Sehra H.K."/>
            <person name="Shaw-Smith C."/>
            <person name="Shen H."/>
            <person name="Sheridan E.M."/>
            <person name="Shownkeen R."/>
            <person name="Skuce C.D."/>
            <person name="Smith M.L."/>
            <person name="Sotheran E.C."/>
            <person name="Steingruber H.E."/>
            <person name="Steward C.A."/>
            <person name="Storey R."/>
            <person name="Swann R.M."/>
            <person name="Swarbreck D."/>
            <person name="Tabor P.E."/>
            <person name="Taudien S."/>
            <person name="Taylor T."/>
            <person name="Teague B."/>
            <person name="Thomas K."/>
            <person name="Thorpe A."/>
            <person name="Timms K."/>
            <person name="Tracey A."/>
            <person name="Trevanion S."/>
            <person name="Tromans A.C."/>
            <person name="d'Urso M."/>
            <person name="Verduzco D."/>
            <person name="Villasana D."/>
            <person name="Waldron L."/>
            <person name="Wall M."/>
            <person name="Wang Q."/>
            <person name="Warren J."/>
            <person name="Warry G.L."/>
            <person name="Wei X."/>
            <person name="West A."/>
            <person name="Whitehead S.L."/>
            <person name="Whiteley M.N."/>
            <person name="Wilkinson J.E."/>
            <person name="Willey D.L."/>
            <person name="Williams G."/>
            <person name="Williams L."/>
            <person name="Williamson A."/>
            <person name="Williamson H."/>
            <person name="Wilming L."/>
            <person name="Woodmansey R.L."/>
            <person name="Wray P.W."/>
            <person name="Yen J."/>
            <person name="Zhang J."/>
            <person name="Zhou J."/>
            <person name="Zoghbi H."/>
            <person name="Zorilla S."/>
            <person name="Buck D."/>
            <person name="Reinhardt R."/>
            <person name="Poustka A."/>
            <person name="Rosenthal A."/>
            <person name="Lehrach H."/>
            <person name="Meindl A."/>
            <person name="Minx P.J."/>
            <person name="Hillier L.W."/>
            <person name="Willard H.F."/>
            <person name="Wilson R.K."/>
            <person name="Waterston R.H."/>
            <person name="Rice C.M."/>
            <person name="Vaudin M."/>
            <person name="Coulson A."/>
            <person name="Nelson D.L."/>
            <person name="Weinstock G."/>
            <person name="Sulston J.E."/>
            <person name="Durbin R.M."/>
            <person name="Hubbard T."/>
            <person name="Gibbs R.A."/>
            <person name="Beck S."/>
            <person name="Rogers J."/>
            <person name="Bentley D.R."/>
        </authorList>
    </citation>
    <scope>NUCLEOTIDE SEQUENCE [LARGE SCALE GENOMIC DNA]</scope>
</reference>
<reference key="6">
    <citation type="submission" date="2005-07" db="EMBL/GenBank/DDBJ databases">
        <authorList>
            <person name="Mural R.J."/>
            <person name="Istrail S."/>
            <person name="Sutton G.G."/>
            <person name="Florea L."/>
            <person name="Halpern A.L."/>
            <person name="Mobarry C.M."/>
            <person name="Lippert R."/>
            <person name="Walenz B."/>
            <person name="Shatkay H."/>
            <person name="Dew I."/>
            <person name="Miller J.R."/>
            <person name="Flanigan M.J."/>
            <person name="Edwards N.J."/>
            <person name="Bolanos R."/>
            <person name="Fasulo D."/>
            <person name="Halldorsson B.V."/>
            <person name="Hannenhalli S."/>
            <person name="Turner R."/>
            <person name="Yooseph S."/>
            <person name="Lu F."/>
            <person name="Nusskern D.R."/>
            <person name="Shue B.C."/>
            <person name="Zheng X.H."/>
            <person name="Zhong F."/>
            <person name="Delcher A.L."/>
            <person name="Huson D.H."/>
            <person name="Kravitz S.A."/>
            <person name="Mouchard L."/>
            <person name="Reinert K."/>
            <person name="Remington K.A."/>
            <person name="Clark A.G."/>
            <person name="Waterman M.S."/>
            <person name="Eichler E.E."/>
            <person name="Adams M.D."/>
            <person name="Hunkapiller M.W."/>
            <person name="Myers E.W."/>
            <person name="Venter J.C."/>
        </authorList>
    </citation>
    <scope>NUCLEOTIDE SEQUENCE [LARGE SCALE GENOMIC DNA]</scope>
</reference>
<reference key="7">
    <citation type="journal article" date="2004" name="Genome Res.">
        <title>The status, quality, and expansion of the NIH full-length cDNA project: the Mammalian Gene Collection (MGC).</title>
        <authorList>
            <consortium name="The MGC Project Team"/>
        </authorList>
    </citation>
    <scope>NUCLEOTIDE SEQUENCE [LARGE SCALE MRNA] (ISOFORMS 1 AND 2)</scope>
    <source>
        <tissue>Placenta</tissue>
        <tissue>Uterus</tissue>
    </source>
</reference>
<reference key="8">
    <citation type="journal article" date="2011" name="BMC Syst. Biol.">
        <title>Initial characterization of the human central proteome.</title>
        <authorList>
            <person name="Burkard T.R."/>
            <person name="Planyavsky M."/>
            <person name="Kaupe I."/>
            <person name="Breitwieser F.P."/>
            <person name="Buerckstuemmer T."/>
            <person name="Bennett K.L."/>
            <person name="Superti-Furga G."/>
            <person name="Colinge J."/>
        </authorList>
    </citation>
    <scope>IDENTIFICATION BY MASS SPECTROMETRY [LARGE SCALE ANALYSIS]</scope>
</reference>
<reference key="9">
    <citation type="journal article" date="2013" name="Hum. Mol. Genet.">
        <title>Methylation-controlled J-protein MCJ acts in the import of proteins into human mitochondria.</title>
        <authorList>
            <person name="Schusdziarra C."/>
            <person name="Blamowska M."/>
            <person name="Azem A."/>
            <person name="Hell K."/>
        </authorList>
    </citation>
    <scope>INTERACTION WITH DNAJC15</scope>
</reference>
<reference key="10">
    <citation type="journal article" date="2015" name="Proteomics">
        <title>N-terminome analysis of the human mitochondrial proteome.</title>
        <authorList>
            <person name="Vaca Jacome A.S."/>
            <person name="Rabilloud T."/>
            <person name="Schaeffer-Reiss C."/>
            <person name="Rompais M."/>
            <person name="Ayoub D."/>
            <person name="Lane L."/>
            <person name="Bairoch A."/>
            <person name="Van Dorsselaer A."/>
            <person name="Carapito C."/>
        </authorList>
    </citation>
    <scope>IDENTIFICATION BY MASS SPECTROMETRY [LARGE SCALE ANALYSIS]</scope>
</reference>
<reference key="11">
    <citation type="journal article" date="2016" name="Sci. Rep.">
        <title>The presence of disulfide bonds reveals an evolutionarily conserved mechanism involved in mitochondrial protein translocase assembly.</title>
        <authorList>
            <person name="Wrobel L."/>
            <person name="Sokol A.M."/>
            <person name="Chojnacka M."/>
            <person name="Chacinska A."/>
        </authorList>
    </citation>
    <scope>DISULFIDE BOND</scope>
</reference>
<gene>
    <name type="primary">TIMM17B</name>
    <name type="synonym">TIM17B</name>
    <name type="ORF">JM3</name>
</gene>
<keyword id="KW-0025">Alternative splicing</keyword>
<keyword id="KW-1015">Disulfide bond</keyword>
<keyword id="KW-0472">Membrane</keyword>
<keyword id="KW-0496">Mitochondrion</keyword>
<keyword id="KW-0999">Mitochondrion inner membrane</keyword>
<keyword id="KW-0653">Protein transport</keyword>
<keyword id="KW-1267">Proteomics identification</keyword>
<keyword id="KW-1185">Reference proteome</keyword>
<keyword id="KW-0811">Translocation</keyword>
<keyword id="KW-0812">Transmembrane</keyword>
<keyword id="KW-1133">Transmembrane helix</keyword>
<keyword id="KW-0813">Transport</keyword>
<accession>O60830</accession>
<accession>A8K2E2</accession>
<accession>J3KPV3</accession>
<accession>Q9UJV0</accession>
<protein>
    <recommendedName>
        <fullName>Mitochondrial import inner membrane translocase subunit Tim17-B</fullName>
    </recommendedName>
</protein>
<organism>
    <name type="scientific">Homo sapiens</name>
    <name type="common">Human</name>
    <dbReference type="NCBI Taxonomy" id="9606"/>
    <lineage>
        <taxon>Eukaryota</taxon>
        <taxon>Metazoa</taxon>
        <taxon>Chordata</taxon>
        <taxon>Craniata</taxon>
        <taxon>Vertebrata</taxon>
        <taxon>Euteleostomi</taxon>
        <taxon>Mammalia</taxon>
        <taxon>Eutheria</taxon>
        <taxon>Euarchontoglires</taxon>
        <taxon>Primates</taxon>
        <taxon>Haplorrhini</taxon>
        <taxon>Catarrhini</taxon>
        <taxon>Hominidae</taxon>
        <taxon>Homo</taxon>
    </lineage>
</organism>
<feature type="chain" id="PRO_0000210287" description="Mitochondrial import inner membrane translocase subunit Tim17-B">
    <location>
        <begin position="1"/>
        <end position="172"/>
    </location>
</feature>
<feature type="transmembrane region" description="Helical" evidence="2">
    <location>
        <begin position="17"/>
        <end position="37"/>
    </location>
</feature>
<feature type="transmembrane region" description="Helical" evidence="2">
    <location>
        <begin position="61"/>
        <end position="77"/>
    </location>
</feature>
<feature type="transmembrane region" description="Helical" evidence="2">
    <location>
        <begin position="113"/>
        <end position="133"/>
    </location>
</feature>
<feature type="region of interest" description="Disordered" evidence="3">
    <location>
        <begin position="146"/>
        <end position="172"/>
    </location>
</feature>
<feature type="disulfide bond" evidence="1">
    <location>
        <begin position="9"/>
        <end position="78"/>
    </location>
</feature>
<feature type="splice variant" id="VSP_047215" description="In isoform 2." evidence="6">
    <original>V</original>
    <variation>VCRLLSEAPLFIYSCSRSVSPTVNVSSERAESRPTLFMAVSLHMAWCLAHI</variation>
    <location>
        <position position="42"/>
    </location>
</feature>
<name>TI17B_HUMAN</name>
<proteinExistence type="evidence at protein level"/>